<accession>Q5FQZ4</accession>
<feature type="chain" id="PRO_1000011882" description="Diaminopimelate epimerase">
    <location>
        <begin position="1"/>
        <end position="257"/>
    </location>
</feature>
<feature type="active site" description="Proton donor" evidence="1">
    <location>
        <position position="75"/>
    </location>
</feature>
<feature type="active site" description="Proton acceptor" evidence="1">
    <location>
        <position position="202"/>
    </location>
</feature>
<feature type="binding site" evidence="1">
    <location>
        <position position="13"/>
    </location>
    <ligand>
        <name>substrate</name>
    </ligand>
</feature>
<feature type="binding site" evidence="1">
    <location>
        <position position="46"/>
    </location>
    <ligand>
        <name>substrate</name>
    </ligand>
</feature>
<feature type="binding site" evidence="1">
    <location>
        <position position="66"/>
    </location>
    <ligand>
        <name>substrate</name>
    </ligand>
</feature>
<feature type="binding site" evidence="1">
    <location>
        <begin position="76"/>
        <end position="77"/>
    </location>
    <ligand>
        <name>substrate</name>
    </ligand>
</feature>
<feature type="binding site" evidence="1">
    <location>
        <position position="145"/>
    </location>
    <ligand>
        <name>substrate</name>
    </ligand>
</feature>
<feature type="binding site" evidence="1">
    <location>
        <position position="175"/>
    </location>
    <ligand>
        <name>substrate</name>
    </ligand>
</feature>
<feature type="binding site" evidence="1">
    <location>
        <begin position="193"/>
        <end position="194"/>
    </location>
    <ligand>
        <name>substrate</name>
    </ligand>
</feature>
<feature type="binding site" evidence="1">
    <location>
        <begin position="203"/>
        <end position="204"/>
    </location>
    <ligand>
        <name>substrate</name>
    </ligand>
</feature>
<feature type="site" description="Could be important to modulate the pK values of the two catalytic cysteine residues" evidence="1">
    <location>
        <position position="147"/>
    </location>
</feature>
<feature type="site" description="Could be important to modulate the pK values of the two catalytic cysteine residues" evidence="1">
    <location>
        <position position="193"/>
    </location>
</feature>
<reference key="1">
    <citation type="journal article" date="2005" name="Nat. Biotechnol.">
        <title>Complete genome sequence of the acetic acid bacterium Gluconobacter oxydans.</title>
        <authorList>
            <person name="Prust C."/>
            <person name="Hoffmeister M."/>
            <person name="Liesegang H."/>
            <person name="Wiezer A."/>
            <person name="Fricke W.F."/>
            <person name="Ehrenreich A."/>
            <person name="Gottschalk G."/>
            <person name="Deppenmeier U."/>
        </authorList>
    </citation>
    <scope>NUCLEOTIDE SEQUENCE [LARGE SCALE GENOMIC DNA]</scope>
    <source>
        <strain>621H</strain>
    </source>
</reference>
<comment type="function">
    <text evidence="1">Catalyzes the stereoinversion of LL-2,6-diaminopimelate (L,L-DAP) to meso-diaminopimelate (meso-DAP), a precursor of L-lysine and an essential component of the bacterial peptidoglycan.</text>
</comment>
<comment type="catalytic activity">
    <reaction evidence="1">
        <text>(2S,6S)-2,6-diaminopimelate = meso-2,6-diaminopimelate</text>
        <dbReference type="Rhea" id="RHEA:15393"/>
        <dbReference type="ChEBI" id="CHEBI:57609"/>
        <dbReference type="ChEBI" id="CHEBI:57791"/>
        <dbReference type="EC" id="5.1.1.7"/>
    </reaction>
</comment>
<comment type="pathway">
    <text evidence="1">Amino-acid biosynthesis; L-lysine biosynthesis via DAP pathway; DL-2,6-diaminopimelate from LL-2,6-diaminopimelate: step 1/1.</text>
</comment>
<comment type="subunit">
    <text evidence="1">Homodimer.</text>
</comment>
<comment type="subcellular location">
    <subcellularLocation>
        <location evidence="1">Cytoplasm</location>
    </subcellularLocation>
</comment>
<comment type="similarity">
    <text evidence="1">Belongs to the diaminopimelate epimerase family.</text>
</comment>
<dbReference type="EC" id="5.1.1.7" evidence="1"/>
<dbReference type="EMBL" id="CP000009">
    <property type="protein sequence ID" value="AAW61202.1"/>
    <property type="molecule type" value="Genomic_DNA"/>
</dbReference>
<dbReference type="RefSeq" id="WP_011252989.1">
    <property type="nucleotide sequence ID" value="NC_006677.1"/>
</dbReference>
<dbReference type="SMR" id="Q5FQZ4"/>
<dbReference type="STRING" id="290633.GOX1453"/>
<dbReference type="KEGG" id="gox:GOX1453"/>
<dbReference type="eggNOG" id="COG0253">
    <property type="taxonomic scope" value="Bacteria"/>
</dbReference>
<dbReference type="HOGENOM" id="CLU_053306_1_0_5"/>
<dbReference type="UniPathway" id="UPA00034">
    <property type="reaction ID" value="UER00025"/>
</dbReference>
<dbReference type="Proteomes" id="UP000006375">
    <property type="component" value="Chromosome"/>
</dbReference>
<dbReference type="GO" id="GO:0005829">
    <property type="term" value="C:cytosol"/>
    <property type="evidence" value="ECO:0007669"/>
    <property type="project" value="TreeGrafter"/>
</dbReference>
<dbReference type="GO" id="GO:0008837">
    <property type="term" value="F:diaminopimelate epimerase activity"/>
    <property type="evidence" value="ECO:0007669"/>
    <property type="project" value="UniProtKB-UniRule"/>
</dbReference>
<dbReference type="GO" id="GO:0009089">
    <property type="term" value="P:lysine biosynthetic process via diaminopimelate"/>
    <property type="evidence" value="ECO:0007669"/>
    <property type="project" value="UniProtKB-UniRule"/>
</dbReference>
<dbReference type="Gene3D" id="3.10.310.10">
    <property type="entry name" value="Diaminopimelate Epimerase, Chain A, domain 1"/>
    <property type="match status" value="2"/>
</dbReference>
<dbReference type="HAMAP" id="MF_00197">
    <property type="entry name" value="DAP_epimerase"/>
    <property type="match status" value="1"/>
</dbReference>
<dbReference type="InterPro" id="IPR018510">
    <property type="entry name" value="DAP_epimerase_AS"/>
</dbReference>
<dbReference type="InterPro" id="IPR001653">
    <property type="entry name" value="DAP_epimerase_DapF"/>
</dbReference>
<dbReference type="NCBIfam" id="TIGR00652">
    <property type="entry name" value="DapF"/>
    <property type="match status" value="1"/>
</dbReference>
<dbReference type="PANTHER" id="PTHR31689:SF0">
    <property type="entry name" value="DIAMINOPIMELATE EPIMERASE"/>
    <property type="match status" value="1"/>
</dbReference>
<dbReference type="PANTHER" id="PTHR31689">
    <property type="entry name" value="DIAMINOPIMELATE EPIMERASE, CHLOROPLASTIC"/>
    <property type="match status" value="1"/>
</dbReference>
<dbReference type="Pfam" id="PF01678">
    <property type="entry name" value="DAP_epimerase"/>
    <property type="match status" value="2"/>
</dbReference>
<dbReference type="SUPFAM" id="SSF54506">
    <property type="entry name" value="Diaminopimelate epimerase-like"/>
    <property type="match status" value="1"/>
</dbReference>
<dbReference type="PROSITE" id="PS01326">
    <property type="entry name" value="DAP_EPIMERASE"/>
    <property type="match status" value="1"/>
</dbReference>
<organism>
    <name type="scientific">Gluconobacter oxydans (strain 621H)</name>
    <name type="common">Gluconobacter suboxydans</name>
    <dbReference type="NCBI Taxonomy" id="290633"/>
    <lineage>
        <taxon>Bacteria</taxon>
        <taxon>Pseudomonadati</taxon>
        <taxon>Pseudomonadota</taxon>
        <taxon>Alphaproteobacteria</taxon>
        <taxon>Acetobacterales</taxon>
        <taxon>Acetobacteraceae</taxon>
        <taxon>Gluconobacter</taxon>
    </lineage>
</organism>
<keyword id="KW-0028">Amino-acid biosynthesis</keyword>
<keyword id="KW-0963">Cytoplasm</keyword>
<keyword id="KW-0413">Isomerase</keyword>
<keyword id="KW-0457">Lysine biosynthesis</keyword>
<keyword id="KW-1185">Reference proteome</keyword>
<evidence type="ECO:0000255" key="1">
    <source>
        <dbReference type="HAMAP-Rule" id="MF_00197"/>
    </source>
</evidence>
<name>DAPF_GLUOX</name>
<gene>
    <name evidence="1" type="primary">dapF</name>
    <name type="ordered locus">GOX1453</name>
</gene>
<protein>
    <recommendedName>
        <fullName evidence="1">Diaminopimelate epimerase</fullName>
        <shortName evidence="1">DAP epimerase</shortName>
        <ecNumber evidence="1">5.1.1.7</ecNumber>
    </recommendedName>
    <alternativeName>
        <fullName evidence="1">PLP-independent amino acid racemase</fullName>
    </alternativeName>
</protein>
<sequence length="257" mass="27293">MTLSFTKMHGLGNDFVVIDGRQNDPALETATIRHLCDRRFGIGCDQLVLLTPPTLAGADVHVRFFNPDGSEAGACGNASRCVAKFVGGAPTLQTAAGLLPTAQDGDLFTVDMGTPRLDWQDVPLSRACDTLHLPLHDAAACSMGNPHATLFGDAFRAEALGPGLERDPLFPERANIGFAQILSPIHMRLRVWERGAGLTLACGSGACAAVVNAVRRGLTERTCTVTMDGGDLRITWREDGHVFMTGPAVTVFHGTTA</sequence>
<proteinExistence type="inferred from homology"/>